<accession>A6MMM2</accession>
<evidence type="ECO:0000255" key="1">
    <source>
        <dbReference type="HAMAP-Rule" id="MF_01317"/>
    </source>
</evidence>
<comment type="function">
    <text evidence="1">One of the components of the core complex of photosystem II (PSII). PSII is a light-driven water:plastoquinone oxidoreductase that uses light energy to abstract electrons from H(2)O, generating O(2) and a proton gradient subsequently used for ATP formation. It consists of a core antenna complex that captures photons, and an electron transfer chain that converts photonic excitation into a charge separation. This subunit is found at the monomer-monomer interface and is required for correct PSII assembly and/or dimerization.</text>
</comment>
<comment type="subunit">
    <text evidence="1">PSII is composed of 1 copy each of membrane proteins PsbA, PsbB, PsbC, PsbD, PsbE, PsbF, PsbH, PsbI, PsbJ, PsbK, PsbL, PsbM, PsbT, PsbX, PsbY, PsbZ, Psb30/Ycf12, at least 3 peripheral proteins of the oxygen-evolving complex and a large number of cofactors. It forms dimeric complexes.</text>
</comment>
<comment type="subcellular location">
    <subcellularLocation>
        <location evidence="1">Plastid</location>
        <location evidence="1">Chloroplast thylakoid membrane</location>
        <topology evidence="1">Single-pass membrane protein</topology>
    </subcellularLocation>
</comment>
<comment type="similarity">
    <text evidence="1">Belongs to the PsbL family.</text>
</comment>
<name>PSBL_DIOEL</name>
<dbReference type="EMBL" id="EF380353">
    <property type="protein sequence ID" value="ABR01445.1"/>
    <property type="molecule type" value="Genomic_DNA"/>
</dbReference>
<dbReference type="RefSeq" id="YP_001294367.1">
    <property type="nucleotide sequence ID" value="NC_009601.1"/>
</dbReference>
<dbReference type="SMR" id="A6MMM2"/>
<dbReference type="GeneID" id="5236594"/>
<dbReference type="GO" id="GO:0009535">
    <property type="term" value="C:chloroplast thylakoid membrane"/>
    <property type="evidence" value="ECO:0007669"/>
    <property type="project" value="UniProtKB-SubCell"/>
</dbReference>
<dbReference type="GO" id="GO:0009539">
    <property type="term" value="C:photosystem II reaction center"/>
    <property type="evidence" value="ECO:0007669"/>
    <property type="project" value="InterPro"/>
</dbReference>
<dbReference type="GO" id="GO:0015979">
    <property type="term" value="P:photosynthesis"/>
    <property type="evidence" value="ECO:0007669"/>
    <property type="project" value="UniProtKB-UniRule"/>
</dbReference>
<dbReference type="HAMAP" id="MF_01317">
    <property type="entry name" value="PSII_PsbL"/>
    <property type="match status" value="1"/>
</dbReference>
<dbReference type="InterPro" id="IPR003372">
    <property type="entry name" value="PSII_PsbL"/>
</dbReference>
<dbReference type="InterPro" id="IPR037266">
    <property type="entry name" value="PSII_PsbL_sf"/>
</dbReference>
<dbReference type="NCBIfam" id="NF001972">
    <property type="entry name" value="PRK00753.1"/>
    <property type="match status" value="1"/>
</dbReference>
<dbReference type="Pfam" id="PF02419">
    <property type="entry name" value="PsbL"/>
    <property type="match status" value="1"/>
</dbReference>
<dbReference type="SUPFAM" id="SSF161017">
    <property type="entry name" value="Photosystem II reaction center protein L, PsbL"/>
    <property type="match status" value="1"/>
</dbReference>
<gene>
    <name evidence="1" type="primary">psbL</name>
</gene>
<geneLocation type="chloroplast"/>
<sequence length="38" mass="4497">MTQSNPNEQNVELNRTSLYWGLLLIFVLAVLFSNYFFN</sequence>
<protein>
    <recommendedName>
        <fullName evidence="1">Photosystem II reaction center protein L</fullName>
        <shortName evidence="1">PSII-L</shortName>
    </recommendedName>
</protein>
<keyword id="KW-0150">Chloroplast</keyword>
<keyword id="KW-0472">Membrane</keyword>
<keyword id="KW-0602">Photosynthesis</keyword>
<keyword id="KW-0604">Photosystem II</keyword>
<keyword id="KW-0934">Plastid</keyword>
<keyword id="KW-0674">Reaction center</keyword>
<keyword id="KW-0793">Thylakoid</keyword>
<keyword id="KW-0812">Transmembrane</keyword>
<keyword id="KW-1133">Transmembrane helix</keyword>
<proteinExistence type="inferred from homology"/>
<reference key="1">
    <citation type="journal article" date="2007" name="Mol. Phylogenet. Evol.">
        <title>Phylogenetic and evolutionary implications of complete chloroplast genome sequences of four early-diverging angiosperms: Buxus (Buxaceae), Chloranthus (Chloranthaceae), Dioscorea (Dioscoreaceae), and Illicium (Schisandraceae).</title>
        <authorList>
            <person name="Hansen D.R."/>
            <person name="Dastidar S.G."/>
            <person name="Cai Z."/>
            <person name="Penaflor C."/>
            <person name="Kuehl J.V."/>
            <person name="Boore J.L."/>
            <person name="Jansen R.K."/>
        </authorList>
    </citation>
    <scope>NUCLEOTIDE SEQUENCE [LARGE SCALE GENOMIC DNA]</scope>
</reference>
<feature type="chain" id="PRO_0000306232" description="Photosystem II reaction center protein L">
    <location>
        <begin position="1"/>
        <end position="38"/>
    </location>
</feature>
<feature type="transmembrane region" description="Helical" evidence="1">
    <location>
        <begin position="17"/>
        <end position="37"/>
    </location>
</feature>
<organism>
    <name type="scientific">Dioscorea elephantipes</name>
    <name type="common">Elephant's foot yam</name>
    <name type="synonym">Testudinaria elephantipes</name>
    <dbReference type="NCBI Taxonomy" id="145284"/>
    <lineage>
        <taxon>Eukaryota</taxon>
        <taxon>Viridiplantae</taxon>
        <taxon>Streptophyta</taxon>
        <taxon>Embryophyta</taxon>
        <taxon>Tracheophyta</taxon>
        <taxon>Spermatophyta</taxon>
        <taxon>Magnoliopsida</taxon>
        <taxon>Liliopsida</taxon>
        <taxon>Dioscoreales</taxon>
        <taxon>Dioscoreaceae</taxon>
        <taxon>Dioscorea</taxon>
    </lineage>
</organism>